<feature type="chain" id="PRO_0000452556" description="FAD-dependent monooxygenase ntnA">
    <location>
        <begin position="1"/>
        <end position="754"/>
    </location>
</feature>
<feature type="transmembrane region" description="Helical" evidence="3">
    <location>
        <begin position="3"/>
        <end position="23"/>
    </location>
</feature>
<feature type="transmembrane region" description="Helical" evidence="3">
    <location>
        <begin position="446"/>
        <end position="466"/>
    </location>
</feature>
<feature type="transmembrane region" description="Helical" evidence="3">
    <location>
        <begin position="486"/>
        <end position="506"/>
    </location>
</feature>
<feature type="transmembrane region" description="Helical" evidence="3">
    <location>
        <begin position="536"/>
        <end position="556"/>
    </location>
</feature>
<feature type="transmembrane region" description="Helical" evidence="3">
    <location>
        <begin position="563"/>
        <end position="583"/>
    </location>
</feature>
<feature type="transmembrane region" description="Helical" evidence="3">
    <location>
        <begin position="595"/>
        <end position="615"/>
    </location>
</feature>
<feature type="transmembrane region" description="Helical" evidence="3">
    <location>
        <begin position="644"/>
        <end position="664"/>
    </location>
</feature>
<feature type="transmembrane region" description="Helical" evidence="3">
    <location>
        <begin position="679"/>
        <end position="697"/>
    </location>
</feature>
<feature type="transmembrane region" description="Helical" evidence="3">
    <location>
        <begin position="712"/>
        <end position="732"/>
    </location>
</feature>
<feature type="active site" evidence="2">
    <location>
        <position position="218"/>
    </location>
</feature>
<feature type="binding site" evidence="2">
    <location>
        <position position="34"/>
    </location>
    <ligand>
        <name>FAD</name>
        <dbReference type="ChEBI" id="CHEBI:57692"/>
    </ligand>
</feature>
<feature type="binding site" evidence="2">
    <location>
        <position position="48"/>
    </location>
    <ligand>
        <name>FAD</name>
        <dbReference type="ChEBI" id="CHEBI:57692"/>
    </ligand>
</feature>
<feature type="binding site" evidence="2">
    <location>
        <position position="109"/>
    </location>
    <ligand>
        <name>FAD</name>
        <dbReference type="ChEBI" id="CHEBI:57692"/>
    </ligand>
</feature>
<feature type="binding site" evidence="2">
    <location>
        <position position="311"/>
    </location>
    <ligand>
        <name>FAD</name>
        <dbReference type="ChEBI" id="CHEBI:57692"/>
    </ligand>
</feature>
<feature type="binding site" evidence="2">
    <location>
        <position position="324"/>
    </location>
    <ligand>
        <name>FAD</name>
        <dbReference type="ChEBI" id="CHEBI:57692"/>
    </ligand>
</feature>
<feature type="glycosylation site" description="N-linked (GlcNAc...) asparagine" evidence="4">
    <location>
        <position position="586"/>
    </location>
</feature>
<feature type="glycosylation site" description="N-linked (GlcNAc...) asparagine" evidence="4">
    <location>
        <position position="616"/>
    </location>
</feature>
<feature type="glycosylation site" description="N-linked (GlcNAc...) asparagine" evidence="4">
    <location>
        <position position="701"/>
    </location>
</feature>
<accession>A0A455LLV4</accession>
<evidence type="ECO:0000250" key="1">
    <source>
        <dbReference type="UniProtKB" id="A6T923"/>
    </source>
</evidence>
<evidence type="ECO:0000250" key="2">
    <source>
        <dbReference type="UniProtKB" id="B8M9J8"/>
    </source>
</evidence>
<evidence type="ECO:0000255" key="3"/>
<evidence type="ECO:0000255" key="4">
    <source>
        <dbReference type="PROSITE-ProRule" id="PRU00498"/>
    </source>
</evidence>
<evidence type="ECO:0000269" key="5">
    <source>
    </source>
</evidence>
<evidence type="ECO:0000303" key="6">
    <source>
    </source>
</evidence>
<evidence type="ECO:0000305" key="7"/>
<evidence type="ECO:0000305" key="8">
    <source>
    </source>
</evidence>
<proteinExistence type="evidence at transcript level"/>
<sequence length="754" mass="83513">MAIPFKVLIIGGGVAGLTLAIMLEAYGFDYELLEKHSDVAPKLGAGVGLTPNGARILDQIGVWEMMCERSSPVDSGTALSPEGRTVIFNPNMGEWLQKLFGYKIHFLSRHDCLKILFNKIQQKSRVHLLKEVIKIEAGNLGEKGYVETKDGSIYTGDIIIGADGVRSSVRRELWRIADSESPGYIPKQDKTGIVSFYTAVVGIAYNSGLPEGGSARAYNHHRSYFFQEGREGSGEFYWWLCAKNEKTKEGVIPKLSSEVKEGLLNKYKNDQIGPDLTLGALYKSSIYSTVIPLQEFVLQKCFYKNILLIGDTFRKLHPVAGQGANSAIEESAFVADMLWDLRERGALHDPDSIQKALTEFQTERVVRTTALREDANLVQRMESLDNPVMKFMALKFIPRLNFVIAFLPQLGSSFTPARHLKHLRPPKVGLCPFSQDMKAKPLPRSPLATFSWVTVLILAASSPWLASKYFISGARSFTDDQASQLAEVLELYISILSVSISGMWVIESYKTSSLISPFTSSLPWILASNFWGWQKILPIYICFYILSSQSVVYYYMPQTMTDLGVAKALLPALLVVYTVSAVCTINESGGNTDNSWWFTADFAFPVVAYLSGMFLNATSTMPQAVDVVFSTIDIPYQRRFQNTIAFVGFVAYAALASQYGTTILNEGLNLLNIPAVKNLASLTTVTTLWCLYSAWELRRINATGTSVIRAWLTILSSTIFGGPAATLAGTFIWSKVELAKATSFHPTMQSTDTL</sequence>
<keyword id="KW-0274">FAD</keyword>
<keyword id="KW-0285">Flavoprotein</keyword>
<keyword id="KW-0325">Glycoprotein</keyword>
<keyword id="KW-0472">Membrane</keyword>
<keyword id="KW-0503">Monooxygenase</keyword>
<keyword id="KW-0560">Oxidoreductase</keyword>
<keyword id="KW-0812">Transmembrane</keyword>
<keyword id="KW-1133">Transmembrane helix</keyword>
<dbReference type="EC" id="1.-.-.-" evidence="8"/>
<dbReference type="EMBL" id="MH182997">
    <property type="protein sequence ID" value="AYO60864.1"/>
    <property type="molecule type" value="mRNA"/>
</dbReference>
<dbReference type="SMR" id="A0A455LLV4"/>
<dbReference type="GlyCosmos" id="A0A455LLV4">
    <property type="glycosylation" value="3 sites, No reported glycans"/>
</dbReference>
<dbReference type="UniPathway" id="UPA00213"/>
<dbReference type="GO" id="GO:0016020">
    <property type="term" value="C:membrane"/>
    <property type="evidence" value="ECO:0007669"/>
    <property type="project" value="UniProtKB-SubCell"/>
</dbReference>
<dbReference type="GO" id="GO:0071949">
    <property type="term" value="F:FAD binding"/>
    <property type="evidence" value="ECO:0007669"/>
    <property type="project" value="InterPro"/>
</dbReference>
<dbReference type="GO" id="GO:0004497">
    <property type="term" value="F:monooxygenase activity"/>
    <property type="evidence" value="ECO:0007669"/>
    <property type="project" value="UniProtKB-KW"/>
</dbReference>
<dbReference type="GO" id="GO:0016114">
    <property type="term" value="P:terpenoid biosynthetic process"/>
    <property type="evidence" value="ECO:0007669"/>
    <property type="project" value="UniProtKB-UniPathway"/>
</dbReference>
<dbReference type="Gene3D" id="3.50.50.60">
    <property type="entry name" value="FAD/NAD(P)-binding domain"/>
    <property type="match status" value="1"/>
</dbReference>
<dbReference type="InterPro" id="IPR002938">
    <property type="entry name" value="FAD-bd"/>
</dbReference>
<dbReference type="InterPro" id="IPR036188">
    <property type="entry name" value="FAD/NAD-bd_sf"/>
</dbReference>
<dbReference type="InterPro" id="IPR050562">
    <property type="entry name" value="FAD_mOase_fung"/>
</dbReference>
<dbReference type="PANTHER" id="PTHR47356:SF2">
    <property type="entry name" value="FAD-BINDING DOMAIN-CONTAINING PROTEIN-RELATED"/>
    <property type="match status" value="1"/>
</dbReference>
<dbReference type="PANTHER" id="PTHR47356">
    <property type="entry name" value="FAD-DEPENDENT MONOOXYGENASE ASQG-RELATED"/>
    <property type="match status" value="1"/>
</dbReference>
<dbReference type="Pfam" id="PF01494">
    <property type="entry name" value="FAD_binding_3"/>
    <property type="match status" value="1"/>
</dbReference>
<dbReference type="PRINTS" id="PR00420">
    <property type="entry name" value="RNGMNOXGNASE"/>
</dbReference>
<dbReference type="SUPFAM" id="SSF51905">
    <property type="entry name" value="FAD/NAD(P)-binding domain"/>
    <property type="match status" value="1"/>
</dbReference>
<name>NTNA_NECSZ</name>
<organism>
    <name type="scientific">Nectria sp</name>
    <dbReference type="NCBI Taxonomy" id="1755444"/>
    <lineage>
        <taxon>Eukaryota</taxon>
        <taxon>Fungi</taxon>
        <taxon>Dikarya</taxon>
        <taxon>Ascomycota</taxon>
        <taxon>Pezizomycotina</taxon>
        <taxon>Sordariomycetes</taxon>
        <taxon>Hypocreomycetidae</taxon>
        <taxon>Hypocreales</taxon>
        <taxon>Nectriaceae</taxon>
        <taxon>Nectria</taxon>
    </lineage>
</organism>
<gene>
    <name evidence="6" type="primary">ntnA</name>
</gene>
<comment type="function">
    <text evidence="5 8">FAD-dependent monooxygenase; part of the gene cluster that mediates the biosynthesis of the meroterpenoids nectripenoids A and B, as well as cochliquninone D and isocochliquninone E (PubMed:29797385). The pathway probably begins with the HR-PKS ntnH that catalyzes two chain-extension steps to form a reduced triketide, which then primes the SAT domain in the NR-PKS ntnG to initiate three more cycles of extension to give a linear hexaketide corresponding to the polyketide part of nectripenoids (Probable). The FAD-dependent monooxygenase ntnJ then performs an oxidative decarboxylation at C11 of the ntnH/ntnG product, via an electrophilic aromatic hydroxylation with concomitant ipso-decarboxylation (Probable). The membrane-bound polyprenyl transferase ntnF then introduces a farnesyl group before the FAD-dependent monooxygenase ntnK functions as the first epoxidase on terminal C12'-C13' olefin, followed by a second epoxidation on C7'-C8' catalyzed by ntnA (Probable). The terpene cyclase/mutase ntnI then initiates the sequential tricyclic ring formation through protonation of the terminal epoxide and catalyzes the regioselective and stereoselective 6/6/6-tricyclic ring formation (Probable). The cytochrome P450 monooxygenase ntnM may then hydroxylate C1' (Probable).</text>
</comment>
<comment type="cofactor">
    <cofactor evidence="1">
        <name>FAD</name>
        <dbReference type="ChEBI" id="CHEBI:57692"/>
    </cofactor>
</comment>
<comment type="pathway">
    <text evidence="8">Secondary metabolite biosynthesis; terpenoid biosynthesis.</text>
</comment>
<comment type="subcellular location">
    <subcellularLocation>
        <location evidence="3">Membrane</location>
        <topology evidence="3">Multi-pass membrane protein</topology>
    </subcellularLocation>
</comment>
<comment type="similarity">
    <text evidence="7">Belongs to the paxM FAD-dependent monooxygenase family.</text>
</comment>
<protein>
    <recommendedName>
        <fullName evidence="6">FAD-dependent monooxygenase ntnA</fullName>
        <ecNumber evidence="8">1.-.-.-</ecNumber>
    </recommendedName>
    <alternativeName>
        <fullName evidence="6">Nectripenoid biosynthesis cluster protein A</fullName>
    </alternativeName>
</protein>
<reference key="1">
    <citation type="journal article" date="2018" name="Angew. Chem. Int. Ed.">
        <title>Genome mining and comparative biosynthesis of meroterpenoids from two phylogenetically distinct fungi.</title>
        <authorList>
            <person name="Zhang X."/>
            <person name="Wang T.T."/>
            <person name="Xu Q.L."/>
            <person name="Xiong Y."/>
            <person name="Zhang L."/>
            <person name="Han H."/>
            <person name="Xu K."/>
            <person name="Guo W.J."/>
            <person name="Xu Q."/>
            <person name="Tan R.X."/>
            <person name="Ge H.M."/>
        </authorList>
    </citation>
    <scope>NUCLEOTIDE SEQUENCE [MRNA]</scope>
    <scope>FUNCTION</scope>
    <scope>PATHWAY</scope>
    <source>
        <strain>Z14-w</strain>
    </source>
</reference>